<feature type="chain" id="PRO_0000113063" description="Ornithine carbamoyltransferase, catabolic">
    <location>
        <begin position="1"/>
        <end position="295"/>
    </location>
</feature>
<feature type="binding site" evidence="1">
    <location>
        <begin position="49"/>
        <end position="52"/>
    </location>
    <ligand>
        <name>carbamoyl phosphate</name>
        <dbReference type="ChEBI" id="CHEBI:58228"/>
    </ligand>
</feature>
<feature type="binding site" evidence="1">
    <location>
        <position position="76"/>
    </location>
    <ligand>
        <name>carbamoyl phosphate</name>
        <dbReference type="ChEBI" id="CHEBI:58228"/>
    </ligand>
</feature>
<feature type="binding site" evidence="1">
    <location>
        <position position="100"/>
    </location>
    <ligand>
        <name>carbamoyl phosphate</name>
        <dbReference type="ChEBI" id="CHEBI:58228"/>
    </ligand>
</feature>
<feature type="binding site" evidence="1">
    <location>
        <begin position="127"/>
        <end position="130"/>
    </location>
    <ligand>
        <name>carbamoyl phosphate</name>
        <dbReference type="ChEBI" id="CHEBI:58228"/>
    </ligand>
</feature>
<feature type="binding site" evidence="1">
    <location>
        <position position="155"/>
    </location>
    <ligand>
        <name>L-ornithine</name>
        <dbReference type="ChEBI" id="CHEBI:46911"/>
    </ligand>
</feature>
<feature type="binding site" evidence="1">
    <location>
        <position position="213"/>
    </location>
    <ligand>
        <name>L-ornithine</name>
        <dbReference type="ChEBI" id="CHEBI:46911"/>
    </ligand>
</feature>
<feature type="binding site" evidence="1">
    <location>
        <begin position="217"/>
        <end position="218"/>
    </location>
    <ligand>
        <name>L-ornithine</name>
        <dbReference type="ChEBI" id="CHEBI:46911"/>
    </ligand>
</feature>
<feature type="binding site" evidence="1">
    <location>
        <begin position="253"/>
        <end position="254"/>
    </location>
    <ligand>
        <name>carbamoyl phosphate</name>
        <dbReference type="ChEBI" id="CHEBI:58228"/>
    </ligand>
</feature>
<feature type="binding site" evidence="1">
    <location>
        <position position="281"/>
    </location>
    <ligand>
        <name>carbamoyl phosphate</name>
        <dbReference type="ChEBI" id="CHEBI:58228"/>
    </ligand>
</feature>
<proteinExistence type="evidence at protein level"/>
<protein>
    <recommendedName>
        <fullName>Ornithine carbamoyltransferase, catabolic</fullName>
        <shortName>cOTCase</shortName>
        <ecNumber>2.1.3.3</ecNumber>
    </recommendedName>
</protein>
<dbReference type="EC" id="2.1.3.3"/>
<dbReference type="EMBL" id="X81712">
    <property type="protein sequence ID" value="CAA57356.1"/>
    <property type="molecule type" value="Genomic_DNA"/>
</dbReference>
<dbReference type="EMBL" id="X80931">
    <property type="protein sequence ID" value="CAA56906.1"/>
    <property type="molecule type" value="Genomic_DNA"/>
</dbReference>
<dbReference type="EMBL" id="AE004438">
    <property type="protein sequence ID" value="AAG20946.1"/>
    <property type="molecule type" value="Genomic_DNA"/>
</dbReference>
<dbReference type="PIR" id="S49261">
    <property type="entry name" value="S49261"/>
</dbReference>
<dbReference type="SMR" id="Q48296"/>
<dbReference type="FunCoup" id="Q48296">
    <property type="interactions" value="157"/>
</dbReference>
<dbReference type="KEGG" id="hal:VNG_6315G"/>
<dbReference type="PATRIC" id="fig|64091.14.peg.2292"/>
<dbReference type="HOGENOM" id="CLU_043846_3_2_2"/>
<dbReference type="InParanoid" id="Q48296"/>
<dbReference type="OrthoDB" id="4696at2157"/>
<dbReference type="PhylomeDB" id="Q48296"/>
<dbReference type="BioCyc" id="MetaCyc:MONOMER-662"/>
<dbReference type="BRENDA" id="2.1.3.3">
    <property type="organism ID" value="2552"/>
</dbReference>
<dbReference type="UniPathway" id="UPA00254">
    <property type="reaction ID" value="UER00365"/>
</dbReference>
<dbReference type="Proteomes" id="UP000000554">
    <property type="component" value="Plasmid pNRC200"/>
</dbReference>
<dbReference type="GO" id="GO:0005737">
    <property type="term" value="C:cytoplasm"/>
    <property type="evidence" value="ECO:0007669"/>
    <property type="project" value="UniProtKB-SubCell"/>
</dbReference>
<dbReference type="GO" id="GO:0016597">
    <property type="term" value="F:amino acid binding"/>
    <property type="evidence" value="ECO:0007669"/>
    <property type="project" value="InterPro"/>
</dbReference>
<dbReference type="GO" id="GO:0004585">
    <property type="term" value="F:ornithine carbamoyltransferase activity"/>
    <property type="evidence" value="ECO:0000318"/>
    <property type="project" value="GO_Central"/>
</dbReference>
<dbReference type="GO" id="GO:0042450">
    <property type="term" value="P:arginine biosynthetic process via ornithine"/>
    <property type="evidence" value="ECO:0000318"/>
    <property type="project" value="GO_Central"/>
</dbReference>
<dbReference type="GO" id="GO:0019547">
    <property type="term" value="P:arginine catabolic process to ornithine"/>
    <property type="evidence" value="ECO:0007669"/>
    <property type="project" value="UniProtKB-UniRule"/>
</dbReference>
<dbReference type="GO" id="GO:0019240">
    <property type="term" value="P:citrulline biosynthetic process"/>
    <property type="evidence" value="ECO:0000318"/>
    <property type="project" value="GO_Central"/>
</dbReference>
<dbReference type="FunFam" id="3.40.50.1370:FF:000008">
    <property type="entry name" value="Ornithine carbamoyltransferase"/>
    <property type="match status" value="1"/>
</dbReference>
<dbReference type="Gene3D" id="3.40.50.1370">
    <property type="entry name" value="Aspartate/ornithine carbamoyltransferase"/>
    <property type="match status" value="2"/>
</dbReference>
<dbReference type="HAMAP" id="MF_01109">
    <property type="entry name" value="OTCase"/>
    <property type="match status" value="1"/>
</dbReference>
<dbReference type="InterPro" id="IPR006132">
    <property type="entry name" value="Asp/Orn_carbamoyltranf_P-bd"/>
</dbReference>
<dbReference type="InterPro" id="IPR006130">
    <property type="entry name" value="Asp/Orn_carbamoylTrfase"/>
</dbReference>
<dbReference type="InterPro" id="IPR036901">
    <property type="entry name" value="Asp/Orn_carbamoylTrfase_sf"/>
</dbReference>
<dbReference type="InterPro" id="IPR006131">
    <property type="entry name" value="Asp_carbamoyltransf_Asp/Orn-bd"/>
</dbReference>
<dbReference type="InterPro" id="IPR002292">
    <property type="entry name" value="Orn/put_carbamltrans"/>
</dbReference>
<dbReference type="InterPro" id="IPR024904">
    <property type="entry name" value="OTCase_ArgI"/>
</dbReference>
<dbReference type="NCBIfam" id="TIGR00658">
    <property type="entry name" value="orni_carb_tr"/>
    <property type="match status" value="1"/>
</dbReference>
<dbReference type="NCBIfam" id="NF001986">
    <property type="entry name" value="PRK00779.1"/>
    <property type="match status" value="1"/>
</dbReference>
<dbReference type="PANTHER" id="PTHR45753">
    <property type="entry name" value="ORNITHINE CARBAMOYLTRANSFERASE, MITOCHONDRIAL"/>
    <property type="match status" value="1"/>
</dbReference>
<dbReference type="PANTHER" id="PTHR45753:SF3">
    <property type="entry name" value="ORNITHINE TRANSCARBAMYLASE, MITOCHONDRIAL"/>
    <property type="match status" value="1"/>
</dbReference>
<dbReference type="Pfam" id="PF00185">
    <property type="entry name" value="OTCace"/>
    <property type="match status" value="1"/>
</dbReference>
<dbReference type="Pfam" id="PF02729">
    <property type="entry name" value="OTCace_N"/>
    <property type="match status" value="1"/>
</dbReference>
<dbReference type="PRINTS" id="PR00100">
    <property type="entry name" value="AOTCASE"/>
</dbReference>
<dbReference type="PRINTS" id="PR00102">
    <property type="entry name" value="OTCASE"/>
</dbReference>
<dbReference type="SUPFAM" id="SSF53671">
    <property type="entry name" value="Aspartate/ornithine carbamoyltransferase"/>
    <property type="match status" value="1"/>
</dbReference>
<dbReference type="PROSITE" id="PS00097">
    <property type="entry name" value="CARBAMOYLTRANSFERASE"/>
    <property type="match status" value="1"/>
</dbReference>
<gene>
    <name type="primary">arcB</name>
    <name type="synonym">argB</name>
    <name type="ordered locus">VNG_6315G</name>
</gene>
<organism>
    <name type="scientific">Halobacterium salinarum (strain ATCC 700922 / JCM 11081 / NRC-1)</name>
    <name type="common">Halobacterium halobium</name>
    <dbReference type="NCBI Taxonomy" id="64091"/>
    <lineage>
        <taxon>Archaea</taxon>
        <taxon>Methanobacteriati</taxon>
        <taxon>Methanobacteriota</taxon>
        <taxon>Stenosarchaea group</taxon>
        <taxon>Halobacteria</taxon>
        <taxon>Halobacteriales</taxon>
        <taxon>Halobacteriaceae</taxon>
        <taxon>Halobacterium</taxon>
        <taxon>Halobacterium salinarum NRC-34001</taxon>
    </lineage>
</organism>
<comment type="function">
    <text evidence="2">Reversibly catalyzes the transfer of the carbamoyl group from carbamoyl phosphate (CP) to the N(epsilon) atom of ornithine (ORN) to produce L-citrulline.</text>
</comment>
<comment type="catalytic activity">
    <reaction>
        <text>carbamoyl phosphate + L-ornithine = L-citrulline + phosphate + H(+)</text>
        <dbReference type="Rhea" id="RHEA:19513"/>
        <dbReference type="ChEBI" id="CHEBI:15378"/>
        <dbReference type="ChEBI" id="CHEBI:43474"/>
        <dbReference type="ChEBI" id="CHEBI:46911"/>
        <dbReference type="ChEBI" id="CHEBI:57743"/>
        <dbReference type="ChEBI" id="CHEBI:58228"/>
        <dbReference type="EC" id="2.1.3.3"/>
    </reaction>
</comment>
<comment type="activity regulation">
    <text evidence="2">Arginine lead to a slight activation. Inhibited by all nucleotide phosphates.</text>
</comment>
<comment type="biophysicochemical properties">
    <kinetics>
        <KM evidence="2">0.4 mM for carbamoyl phosphate</KM>
        <KM evidence="2">8 mM for L-ornithine</KM>
    </kinetics>
    <phDependence>
        <text evidence="2">Optimum pH is 8.8. At the physiological pH of 7, activity is only about 30%.</text>
    </phDependence>
</comment>
<comment type="pathway">
    <text>Amino-acid degradation; L-arginine degradation via ADI pathway; carbamoyl phosphate from L-arginine: step 2/2.</text>
</comment>
<comment type="subunit">
    <text evidence="2">Homohexamer.</text>
</comment>
<comment type="subcellular location">
    <subcellularLocation>
        <location evidence="3">Cytoplasm</location>
    </subcellularLocation>
</comment>
<comment type="miscellaneous">
    <text evidence="4">Not stable below 1 M KCl.</text>
</comment>
<comment type="similarity">
    <text evidence="3">Belongs to the aspartate/ornithine carbamoyltransferase superfamily. OTCase family.</text>
</comment>
<keyword id="KW-0056">Arginine metabolism</keyword>
<keyword id="KW-0963">Cytoplasm</keyword>
<keyword id="KW-0903">Direct protein sequencing</keyword>
<keyword id="KW-0614">Plasmid</keyword>
<keyword id="KW-1185">Reference proteome</keyword>
<keyword id="KW-0808">Transferase</keyword>
<name>OTCC_HALSA</name>
<reference key="1">
    <citation type="journal article" date="1995" name="J. Bacteriol.">
        <title>Catabolic ornithine transcarbamylase of Halobacterium halobium (salinarium): purification, characterization, sequence determination, and evolution.</title>
        <authorList>
            <person name="Ruepp A."/>
            <person name="Mueller H."/>
            <person name="Lottspeich F."/>
            <person name="Soppa J."/>
        </authorList>
    </citation>
    <scope>NUCLEOTIDE SEQUENCE [GENOMIC DNA]</scope>
    <scope>PARTIAL PROTEIN SEQUENCE</scope>
    <scope>FUNCTION AS A COTCASE</scope>
    <scope>BIOPHYSICOCHEMICAL PROPERTIES</scope>
    <scope>ACTIVITY REGULATION</scope>
    <scope>SUBUNIT</scope>
    <source>
        <strain>R1 / S9 / L33</strain>
    </source>
</reference>
<reference key="2">
    <citation type="journal article" date="1996" name="J. Bacteriol.">
        <title>Fermentative arginine degradation in Halobacterium salinarium (formerly Halobacterium halobium): genes, gene products, and transcripts of the arcRACB gene cluster.</title>
        <authorList>
            <person name="Ruepp A."/>
            <person name="Soppa J."/>
        </authorList>
    </citation>
    <scope>NUCLEOTIDE SEQUENCE [GENOMIC DNA]</scope>
    <source>
        <strain>R1 / S9 / L33</strain>
    </source>
</reference>
<reference key="3">
    <citation type="journal article" date="2000" name="Proc. Natl. Acad. Sci. U.S.A.">
        <title>Genome sequence of Halobacterium species NRC-1.</title>
        <authorList>
            <person name="Ng W.V."/>
            <person name="Kennedy S.P."/>
            <person name="Mahairas G.G."/>
            <person name="Berquist B."/>
            <person name="Pan M."/>
            <person name="Shukla H.D."/>
            <person name="Lasky S.R."/>
            <person name="Baliga N.S."/>
            <person name="Thorsson V."/>
            <person name="Sbrogna J."/>
            <person name="Swartzell S."/>
            <person name="Weir D."/>
            <person name="Hall J."/>
            <person name="Dahl T.A."/>
            <person name="Welti R."/>
            <person name="Goo Y.A."/>
            <person name="Leithauser B."/>
            <person name="Keller K."/>
            <person name="Cruz R."/>
            <person name="Danson M.J."/>
            <person name="Hough D.W."/>
            <person name="Maddocks D.G."/>
            <person name="Jablonski P.E."/>
            <person name="Krebs M.P."/>
            <person name="Angevine C.M."/>
            <person name="Dale H."/>
            <person name="Isenbarger T.A."/>
            <person name="Peck R.F."/>
            <person name="Pohlschroder M."/>
            <person name="Spudich J.L."/>
            <person name="Jung K.-H."/>
            <person name="Alam M."/>
            <person name="Freitas T."/>
            <person name="Hou S."/>
            <person name="Daniels C.J."/>
            <person name="Dennis P.P."/>
            <person name="Omer A.D."/>
            <person name="Ebhardt H."/>
            <person name="Lowe T.M."/>
            <person name="Liang P."/>
            <person name="Riley M."/>
            <person name="Hood L."/>
            <person name="DasSarma S."/>
        </authorList>
    </citation>
    <scope>NUCLEOTIDE SEQUENCE [LARGE SCALE GENOMIC DNA]</scope>
    <source>
        <strain>ATCC 700922 / JCM 11081 / NRC-1</strain>
        <plasmid>pNRC200</plasmid>
    </source>
</reference>
<accession>Q48296</accession>
<accession>Q59454</accession>
<accession>Q9HHN0</accession>
<geneLocation type="plasmid">
    <name>pNRC200</name>
</geneLocation>
<evidence type="ECO:0000255" key="1">
    <source>
        <dbReference type="HAMAP-Rule" id="MF_01109"/>
    </source>
</evidence>
<evidence type="ECO:0000269" key="2">
    <source>
    </source>
</evidence>
<evidence type="ECO:0000305" key="3"/>
<evidence type="ECO:0000305" key="4">
    <source>
    </source>
</evidence>
<sequence length="295" mass="32676">MEHLVDINDVESEEIEQLLDLAASMKENPGEFSGVMDNKSLVMLFAKPSTRTRLSFETGMTQLGGHGIFFEMGSSQLSRGEPISDVSQVMSRYEDAIMARLFEHDEMMELAENADVPVVNGLTDFLHPCQALTDMFTMQEKDRLDTLAFVGDGNNVAHSLMQASAKMGVDCRIATPEGMEPDEEIQDRVSDANVTVTNDPYEAVDGATAVYGDVFVSMGEEEQREEKLAEFDGFQIDQDLMDAARDDAIFMHCLPAHRGEEVTAEVADGPQSVIFDQAENRMHVQKAIVHTLVNQ</sequence>